<comment type="function">
    <text evidence="1">Involved in uracil catabolism.</text>
</comment>
<comment type="similarity">
    <text evidence="2">Belongs to the URC4/urg3 family.</text>
</comment>
<dbReference type="EMBL" id="DQ512719">
    <property type="protein sequence ID" value="ABF58891.1"/>
    <property type="molecule type" value="Genomic_DNA"/>
</dbReference>
<dbReference type="InterPro" id="IPR012469">
    <property type="entry name" value="DUF1688"/>
</dbReference>
<dbReference type="PANTHER" id="PTHR31687">
    <property type="match status" value="1"/>
</dbReference>
<dbReference type="PANTHER" id="PTHR31687:SF3">
    <property type="entry name" value="PROTEIN URG3"/>
    <property type="match status" value="1"/>
</dbReference>
<dbReference type="Pfam" id="PF07958">
    <property type="entry name" value="DUF1688"/>
    <property type="match status" value="1"/>
</dbReference>
<protein>
    <recommendedName>
        <fullName>Uracil catabolism protein 4</fullName>
    </recommendedName>
    <alternativeName>
        <fullName>Pyrimidine-degrading protein 14</fullName>
    </alternativeName>
</protein>
<sequence length="439" mass="48647">MTVDNPVSYFKSISSVRETTKQVFDYVEQNDGQGNHFKMELSKMDDVVDFLCSIIARDYGTDYSSIPPHGRWQHLNCGNVLRVESLIEQWSGAGIDEVEISRKLIDLFVFSVLVDAGAGNTWKYTTTEEGNKAFDRSEGLAVASYYLFVQGALSQDTNDKFKVNGKKLTELTMDEFCQGFQVSDANPLNGTEGRLKLIQNLGVALSTNPAIFGKEGRPGCLVDYLYSKCTKDNGTAVVDLNDVWNALMDGFTSIWPAGRTSIDGEPLGDAWVLDTKAKASGSDAFLDSIVTFHKLTQWLCYSLLVPLENYGYKFTIKNKDMQTGLPEYRNGGLFYDFGVLTLTDGAYKRGLALTQKLGDNSSKIPTFTPEDGAIVEWRCLTIGLLDYLLPLVNKKLDYDLVLPQLIEAGSWKAGREIAAIKRPDTKGPPIELHSDGTVF</sequence>
<proteinExistence type="inferred from homology"/>
<reference key="1">
    <citation type="journal article" date="2008" name="J. Mol. Biol.">
        <title>A second pathway to degrade pyrimidine nucleic acid precursors in eukaryotes.</title>
        <authorList>
            <person name="Andersen G."/>
            <person name="Bjoernberg O."/>
            <person name="Polakova S."/>
            <person name="Pynyaha Y."/>
            <person name="Rasmussen A."/>
            <person name="Moeller K."/>
            <person name="Hofer A."/>
            <person name="Moritz T."/>
            <person name="Sandrini M.P."/>
            <person name="Merico A.M."/>
            <person name="Compagno C."/>
            <person name="Aekerlund H.E."/>
            <person name="Gojkovic Z."/>
            <person name="Piskur J."/>
        </authorList>
    </citation>
    <scope>NUCLEOTIDE SEQUENCE [GENOMIC DNA]</scope>
    <scope>FUNCTION</scope>
</reference>
<feature type="chain" id="PRO_0000367269" description="Uracil catabolism protein 4">
    <location>
        <begin position="1"/>
        <end position="439"/>
    </location>
</feature>
<accession>A5H0J3</accession>
<organism>
    <name type="scientific">Lachancea kluyveri</name>
    <name type="common">Yeast</name>
    <name type="synonym">Saccharomyces kluyveri</name>
    <dbReference type="NCBI Taxonomy" id="4934"/>
    <lineage>
        <taxon>Eukaryota</taxon>
        <taxon>Fungi</taxon>
        <taxon>Dikarya</taxon>
        <taxon>Ascomycota</taxon>
        <taxon>Saccharomycotina</taxon>
        <taxon>Saccharomycetes</taxon>
        <taxon>Saccharomycetales</taxon>
        <taxon>Saccharomycetaceae</taxon>
        <taxon>Lachancea</taxon>
    </lineage>
</organism>
<name>URC4_LACKL</name>
<gene>
    <name type="primary">URC4</name>
    <name type="synonym">PYD14</name>
</gene>
<evidence type="ECO:0000269" key="1">
    <source>
    </source>
</evidence>
<evidence type="ECO:0000305" key="2"/>